<evidence type="ECO:0000250" key="1"/>
<evidence type="ECO:0000250" key="2">
    <source>
        <dbReference type="UniProtKB" id="P0DMD6"/>
    </source>
</evidence>
<evidence type="ECO:0000250" key="3">
    <source>
        <dbReference type="UniProtKB" id="Q27J49"/>
    </source>
</evidence>
<evidence type="ECO:0000255" key="4"/>
<evidence type="ECO:0000256" key="5">
    <source>
        <dbReference type="SAM" id="MobiDB-lite"/>
    </source>
</evidence>
<evidence type="ECO:0000269" key="6">
    <source>
    </source>
</evidence>
<evidence type="ECO:0000269" key="7">
    <source>
    </source>
</evidence>
<evidence type="ECO:0000305" key="8"/>
<evidence type="ECO:0000305" key="9">
    <source>
    </source>
</evidence>
<protein>
    <recommendedName>
        <fullName>Bradykinin-potentiating and C-type natriuretic peptides</fullName>
    </recommendedName>
    <alternativeName>
        <fullName>BPP-CNP</fullName>
    </alternativeName>
    <component>
        <recommendedName>
            <fullName>Bradykinin-potentiating peptide Tf1</fullName>
        </recommendedName>
    </component>
    <component>
        <recommendedName>
            <fullName>Bradykinin-potentiating peptide Tf2</fullName>
        </recommendedName>
    </component>
    <component>
        <recommendedName>
            <fullName>Bradykinin-potentiating peptide Tf3</fullName>
        </recommendedName>
    </component>
    <component>
        <recommendedName>
            <fullName>C-type natriuretic peptide Tf-CNP</fullName>
        </recommendedName>
    </component>
    <component>
        <recommendedName>
            <fullName>C-type natriuretic peptide Tf-CNP(3-22)</fullName>
        </recommendedName>
    </component>
    <component>
        <recommendedName>
            <fullName>C-type natriuretic peptide Tf-CNP(6-22)</fullName>
        </recommendedName>
    </component>
</protein>
<reference key="1">
    <citation type="journal article" date="1999" name="Immunopharmacology">
        <title>Bradykinin-potentiating peptides and C-type natriuretic peptides from snake venom.</title>
        <authorList>
            <person name="Higuchi S."/>
            <person name="Murayama N."/>
            <person name="Saguchi K."/>
            <person name="Ohi H."/>
            <person name="Fujita Y."/>
            <person name="de Camargo A.C.M."/>
            <person name="Ogawa T."/>
            <person name="Deshimaru M."/>
            <person name="Ohno M."/>
        </authorList>
    </citation>
    <scope>NUCLEOTIDE SEQUENCE [MRNA]</scope>
    <source>
        <tissue>Venom gland</tissue>
    </source>
</reference>
<reference key="2">
    <citation type="journal article" date="2000" name="Peptides">
        <title>Two N-terminally truncated forms of C-type natriuretic peptide from habu snake venom.</title>
        <authorList>
            <person name="Michel G.H."/>
            <person name="Murayama N."/>
            <person name="Sada T."/>
            <person name="Nozaki M."/>
            <person name="Saguchi K."/>
            <person name="Ohi H."/>
            <person name="Fujita Y."/>
            <person name="Koike H."/>
            <person name="Higuchi S."/>
        </authorList>
    </citation>
    <scope>PROTEIN SEQUENCE OF 174-193 (TF-CNP(3-22) AND TF-CNP(6-22))</scope>
    <scope>SYNTHESIS OF TF-CNP</scope>
    <scope>SUBCELLULAR LOCATION</scope>
    <scope>FUNCTION</scope>
    <scope>BIOASSAY</scope>
    <source>
        <tissue>Venom</tissue>
    </source>
</reference>
<reference key="3">
    <citation type="journal article" date="2007" name="Biochem. Pharmacol.">
        <title>Identification of novel bradykinin-potentiating peptides (BPPs) in the venom gland of a rattlesnake allowed the evaluation of the structure-function relationship of BPPs.</title>
        <authorList>
            <person name="Gomes C.L."/>
            <person name="Konno K."/>
            <person name="Conceicao I.M."/>
            <person name="Ianzer D."/>
            <person name="Yamanouye N."/>
            <person name="Prezoto B.C."/>
            <person name="Assakura M.T."/>
            <person name="Radis-Baptista G."/>
            <person name="Yamane T."/>
            <person name="Santos R.A."/>
            <person name="de Camargo A.C.M."/>
            <person name="Hayashi M.A.F."/>
        </authorList>
    </citation>
    <scope>SYNTHESIS OF 28-39 AND 44-57</scope>
    <scope>FUNCTION</scope>
</reference>
<organism>
    <name type="scientific">Protobothrops flavoviridis</name>
    <name type="common">Habu</name>
    <name type="synonym">Trimeresurus flavoviridis</name>
    <dbReference type="NCBI Taxonomy" id="88087"/>
    <lineage>
        <taxon>Eukaryota</taxon>
        <taxon>Metazoa</taxon>
        <taxon>Chordata</taxon>
        <taxon>Craniata</taxon>
        <taxon>Vertebrata</taxon>
        <taxon>Euteleostomi</taxon>
        <taxon>Lepidosauria</taxon>
        <taxon>Squamata</taxon>
        <taxon>Bifurcata</taxon>
        <taxon>Unidentata</taxon>
        <taxon>Episquamata</taxon>
        <taxon>Toxicofera</taxon>
        <taxon>Serpentes</taxon>
        <taxon>Colubroidea</taxon>
        <taxon>Viperidae</taxon>
        <taxon>Crotalinae</taxon>
        <taxon>Protobothrops</taxon>
    </lineage>
</organism>
<feature type="signal peptide" evidence="4">
    <location>
        <begin position="1"/>
        <end position="23"/>
    </location>
</feature>
<feature type="propeptide" id="PRO_0000342439" evidence="1">
    <location>
        <begin position="24"/>
        <end position="27"/>
    </location>
</feature>
<feature type="peptide" id="PRO_0000342440" description="Bradykinin-potentiating peptide Tf1" evidence="1">
    <location>
        <begin position="28"/>
        <end position="39"/>
    </location>
</feature>
<feature type="propeptide" id="PRO_0000342441" evidence="1">
    <location>
        <begin position="40"/>
        <end position="43"/>
    </location>
</feature>
<feature type="peptide" id="PRO_0000342442" description="Bradykinin-potentiating peptide Tf2" evidence="1">
    <location>
        <begin position="44"/>
        <end position="57"/>
    </location>
</feature>
<feature type="propeptide" id="PRO_0000342443" evidence="1">
    <location>
        <begin position="58"/>
        <end position="64"/>
    </location>
</feature>
<feature type="peptide" id="PRO_0000342444" description="Bradykinin-potentiating peptide Tf3" evidence="1">
    <location>
        <begin position="65"/>
        <end position="74"/>
    </location>
</feature>
<feature type="propeptide" id="PRO_0000342445" evidence="1">
    <location>
        <begin position="75"/>
        <end position="169"/>
    </location>
</feature>
<feature type="peptide" id="PRO_0000342446" description="C-type natriuretic peptide Tf-CNP" evidence="3 9">
    <location>
        <begin position="172"/>
        <end position="193"/>
    </location>
</feature>
<feature type="peptide" id="PRO_0000342447" description="C-type natriuretic peptide Tf-CNP(3-22)" evidence="6">
    <location>
        <begin position="174"/>
        <end position="193"/>
    </location>
</feature>
<feature type="peptide" id="PRO_0000342448" description="C-type natriuretic peptide Tf-CNP(6-22)" evidence="6">
    <location>
        <begin position="177"/>
        <end position="193"/>
    </location>
</feature>
<feature type="region of interest" description="Disordered" evidence="5">
    <location>
        <begin position="25"/>
        <end position="173"/>
    </location>
</feature>
<feature type="compositionally biased region" description="Low complexity" evidence="5">
    <location>
        <begin position="95"/>
        <end position="123"/>
    </location>
</feature>
<feature type="compositionally biased region" description="Basic and acidic residues" evidence="5">
    <location>
        <begin position="125"/>
        <end position="150"/>
    </location>
</feature>
<feature type="compositionally biased region" description="Gly residues" evidence="5">
    <location>
        <begin position="152"/>
        <end position="162"/>
    </location>
</feature>
<feature type="compositionally biased region" description="Basic residues" evidence="5">
    <location>
        <begin position="163"/>
        <end position="173"/>
    </location>
</feature>
<feature type="modified residue" description="Pyrrolidone carboxylic acid" evidence="1">
    <location>
        <position position="28"/>
    </location>
</feature>
<feature type="modified residue" description="Pyrrolidone carboxylic acid" evidence="1">
    <location>
        <position position="65"/>
    </location>
</feature>
<feature type="disulfide bond" evidence="2">
    <location>
        <begin position="177"/>
        <end position="193"/>
    </location>
</feature>
<keyword id="KW-0165">Cleavage on pair of basic residues</keyword>
<keyword id="KW-0903">Direct protein sequencing</keyword>
<keyword id="KW-1015">Disulfide bond</keyword>
<keyword id="KW-0382">Hypotensive agent</keyword>
<keyword id="KW-0481">Metalloenzyme inhibitor</keyword>
<keyword id="KW-0483">Metalloprotease inhibitor</keyword>
<keyword id="KW-0646">Protease inhibitor</keyword>
<keyword id="KW-0873">Pyrrolidone carboxylic acid</keyword>
<keyword id="KW-0964">Secreted</keyword>
<keyword id="KW-0732">Signal</keyword>
<keyword id="KW-0800">Toxin</keyword>
<keyword id="KW-0838">Vasoactive</keyword>
<keyword id="KW-0840">Vasodilator</keyword>
<accession>P0C7P5</accession>
<comment type="function">
    <text evidence="1 7">Bradykinin-potentiating peptide both inhibits the activity of the angiotensin-converting enzyme (ACE) and enhances the action of bradykinin by inhibiting the peptidases that inactivate it. It acts as an indirect hypotensive agent (By similarity). Neither synthetic Tf1, nor synthetic Tf2 show bradykinin-potentiating effects.</text>
</comment>
<comment type="function">
    <molecule>C-type natriuretic peptide Tf-CNP</molecule>
    <text evidence="6">Has a vasorelaxant activity in rat aortic strips and a diuretic potency in anesthetized rats.</text>
</comment>
<comment type="function">
    <molecule>C-type natriuretic peptide Tf-CNP(6-22)</molecule>
    <text evidence="6">Has a vasorelaxant activity in rat aortic strips and a diuretic potency in anesthetized rats. Is as potent as Tf-CNP.</text>
</comment>
<comment type="subcellular location">
    <subcellularLocation>
        <location evidence="6">Secreted</location>
    </subcellularLocation>
</comment>
<comment type="tissue specificity">
    <text evidence="9">Expressed by the venom gland.</text>
</comment>
<comment type="similarity">
    <text evidence="8">In the N-terminal section; belongs to the bradykinin-potentiating peptide family.</text>
</comment>
<comment type="similarity">
    <text evidence="8">In the C-terminal section; belongs to the natriuretic peptide family.</text>
</comment>
<name>BNP_PROFL</name>
<proteinExistence type="evidence at protein level"/>
<sequence>MFVSRLAASGLLLLALLALSLDGKPVHQSKPGRSPPISPLSAQQWMPEGRPPHPIPPLSVQQWSQGRPRSEVPPVVVQPHESPAGGTTAFREELSPGPEAASGPAAPHRLPKSKGASATSAASRPMRDLRTDGKQERQKWGRMVQPDHHAAPGGGGGGGGGARRMKGLAKKAMGKGCFGHKLDRIGSTSGLGC</sequence>
<dbReference type="GO" id="GO:0005576">
    <property type="term" value="C:extracellular region"/>
    <property type="evidence" value="ECO:0007669"/>
    <property type="project" value="UniProtKB-SubCell"/>
</dbReference>
<dbReference type="GO" id="GO:0005179">
    <property type="term" value="F:hormone activity"/>
    <property type="evidence" value="ECO:0007669"/>
    <property type="project" value="InterPro"/>
</dbReference>
<dbReference type="GO" id="GO:0030414">
    <property type="term" value="F:peptidase inhibitor activity"/>
    <property type="evidence" value="ECO:0007669"/>
    <property type="project" value="UniProtKB-KW"/>
</dbReference>
<dbReference type="GO" id="GO:0090729">
    <property type="term" value="F:toxin activity"/>
    <property type="evidence" value="ECO:0007669"/>
    <property type="project" value="UniProtKB-KW"/>
</dbReference>
<dbReference type="GO" id="GO:0006182">
    <property type="term" value="P:cGMP biosynthetic process"/>
    <property type="evidence" value="ECO:0007669"/>
    <property type="project" value="TreeGrafter"/>
</dbReference>
<dbReference type="GO" id="GO:0007168">
    <property type="term" value="P:receptor guanylyl cyclase signaling pathway"/>
    <property type="evidence" value="ECO:0007669"/>
    <property type="project" value="TreeGrafter"/>
</dbReference>
<dbReference type="GO" id="GO:0008217">
    <property type="term" value="P:regulation of blood pressure"/>
    <property type="evidence" value="ECO:0007669"/>
    <property type="project" value="UniProtKB-KW"/>
</dbReference>
<dbReference type="GO" id="GO:0042311">
    <property type="term" value="P:vasodilation"/>
    <property type="evidence" value="ECO:0007669"/>
    <property type="project" value="UniProtKB-KW"/>
</dbReference>
<dbReference type="InterPro" id="IPR000663">
    <property type="entry name" value="Natr_peptide"/>
</dbReference>
<dbReference type="InterPro" id="IPR030480">
    <property type="entry name" value="Natr_peptide_CS"/>
</dbReference>
<dbReference type="PANTHER" id="PTHR12167">
    <property type="entry name" value="C-TYPE NATRIURETIC PEPTIDE"/>
    <property type="match status" value="1"/>
</dbReference>
<dbReference type="PANTHER" id="PTHR12167:SF2">
    <property type="entry name" value="C-TYPE NATRIURETIC PEPTIDE"/>
    <property type="match status" value="1"/>
</dbReference>
<dbReference type="Pfam" id="PF00212">
    <property type="entry name" value="ANP"/>
    <property type="match status" value="1"/>
</dbReference>
<dbReference type="PRINTS" id="PR00710">
    <property type="entry name" value="NATPEPTIDES"/>
</dbReference>
<dbReference type="SMART" id="SM00183">
    <property type="entry name" value="NAT_PEP"/>
    <property type="match status" value="1"/>
</dbReference>
<dbReference type="PROSITE" id="PS00263">
    <property type="entry name" value="NATRIURETIC_PEPTIDE"/>
    <property type="match status" value="1"/>
</dbReference>